<keyword id="KW-0963">Cytoplasm</keyword>
<keyword id="KW-0275">Fatty acid biosynthesis</keyword>
<keyword id="KW-0276">Fatty acid metabolism</keyword>
<keyword id="KW-0444">Lipid biosynthesis</keyword>
<keyword id="KW-0443">Lipid metabolism</keyword>
<keyword id="KW-0596">Phosphopantetheine</keyword>
<keyword id="KW-0597">Phosphoprotein</keyword>
<accession>A7Z4L2</accession>
<proteinExistence type="inferred from homology"/>
<evidence type="ECO:0000255" key="1">
    <source>
        <dbReference type="HAMAP-Rule" id="MF_01217"/>
    </source>
</evidence>
<evidence type="ECO:0000255" key="2">
    <source>
        <dbReference type="PROSITE-ProRule" id="PRU00258"/>
    </source>
</evidence>
<sequence>MADTLERVTKIIVDRLGVDEADVKLEASFKEDLGADSLDVVELVMELEDEFDMEISDEDAEKIATVGDAVNYIQNQQ</sequence>
<organism>
    <name type="scientific">Bacillus velezensis (strain DSM 23117 / BGSC 10A6 / LMG 26770 / FZB42)</name>
    <name type="common">Bacillus amyloliquefaciens subsp. plantarum</name>
    <dbReference type="NCBI Taxonomy" id="326423"/>
    <lineage>
        <taxon>Bacteria</taxon>
        <taxon>Bacillati</taxon>
        <taxon>Bacillota</taxon>
        <taxon>Bacilli</taxon>
        <taxon>Bacillales</taxon>
        <taxon>Bacillaceae</taxon>
        <taxon>Bacillus</taxon>
        <taxon>Bacillus amyloliquefaciens group</taxon>
    </lineage>
</organism>
<reference key="1">
    <citation type="journal article" date="2007" name="Nat. Biotechnol.">
        <title>Comparative analysis of the complete genome sequence of the plant growth-promoting bacterium Bacillus amyloliquefaciens FZB42.</title>
        <authorList>
            <person name="Chen X.H."/>
            <person name="Koumoutsi A."/>
            <person name="Scholz R."/>
            <person name="Eisenreich A."/>
            <person name="Schneider K."/>
            <person name="Heinemeyer I."/>
            <person name="Morgenstern B."/>
            <person name="Voss B."/>
            <person name="Hess W.R."/>
            <person name="Reva O."/>
            <person name="Junge H."/>
            <person name="Voigt B."/>
            <person name="Jungblut P.R."/>
            <person name="Vater J."/>
            <person name="Suessmuth R."/>
            <person name="Liesegang H."/>
            <person name="Strittmatter A."/>
            <person name="Gottschalk G."/>
            <person name="Borriss R."/>
        </authorList>
    </citation>
    <scope>NUCLEOTIDE SEQUENCE [LARGE SCALE GENOMIC DNA]</scope>
    <source>
        <strain>DSM 23117 / BGSC 10A6 / LMG 26770 / FZB42</strain>
    </source>
</reference>
<comment type="function">
    <text evidence="1">Carrier of the growing fatty acid chain in fatty acid biosynthesis.</text>
</comment>
<comment type="pathway">
    <text evidence="1">Lipid metabolism; fatty acid biosynthesis.</text>
</comment>
<comment type="subcellular location">
    <subcellularLocation>
        <location evidence="1">Cytoplasm</location>
    </subcellularLocation>
</comment>
<comment type="PTM">
    <text evidence="1">4'-phosphopantetheine is transferred from CoA to a specific serine of apo-ACP by AcpS. This modification is essential for activity because fatty acids are bound in thioester linkage to the sulfhydryl of the prosthetic group.</text>
</comment>
<comment type="similarity">
    <text evidence="1">Belongs to the acyl carrier protein (ACP) family.</text>
</comment>
<dbReference type="EMBL" id="CP000560">
    <property type="protein sequence ID" value="ABS73938.1"/>
    <property type="molecule type" value="Genomic_DNA"/>
</dbReference>
<dbReference type="RefSeq" id="WP_003154310.1">
    <property type="nucleotide sequence ID" value="NC_009725.2"/>
</dbReference>
<dbReference type="BMRB" id="A7Z4L2"/>
<dbReference type="SMR" id="A7Z4L2"/>
<dbReference type="GeneID" id="93080708"/>
<dbReference type="KEGG" id="bay:RBAM_015750"/>
<dbReference type="HOGENOM" id="CLU_108696_5_3_9"/>
<dbReference type="UniPathway" id="UPA00094"/>
<dbReference type="Proteomes" id="UP000001120">
    <property type="component" value="Chromosome"/>
</dbReference>
<dbReference type="GO" id="GO:0005829">
    <property type="term" value="C:cytosol"/>
    <property type="evidence" value="ECO:0007669"/>
    <property type="project" value="TreeGrafter"/>
</dbReference>
<dbReference type="GO" id="GO:0016020">
    <property type="term" value="C:membrane"/>
    <property type="evidence" value="ECO:0007669"/>
    <property type="project" value="GOC"/>
</dbReference>
<dbReference type="GO" id="GO:0000035">
    <property type="term" value="F:acyl binding"/>
    <property type="evidence" value="ECO:0007669"/>
    <property type="project" value="TreeGrafter"/>
</dbReference>
<dbReference type="GO" id="GO:0000036">
    <property type="term" value="F:acyl carrier activity"/>
    <property type="evidence" value="ECO:0007669"/>
    <property type="project" value="UniProtKB-UniRule"/>
</dbReference>
<dbReference type="GO" id="GO:0009245">
    <property type="term" value="P:lipid A biosynthetic process"/>
    <property type="evidence" value="ECO:0007669"/>
    <property type="project" value="TreeGrafter"/>
</dbReference>
<dbReference type="FunFam" id="1.10.1200.10:FF:000001">
    <property type="entry name" value="Acyl carrier protein"/>
    <property type="match status" value="1"/>
</dbReference>
<dbReference type="Gene3D" id="1.10.1200.10">
    <property type="entry name" value="ACP-like"/>
    <property type="match status" value="1"/>
</dbReference>
<dbReference type="HAMAP" id="MF_01217">
    <property type="entry name" value="Acyl_carrier"/>
    <property type="match status" value="1"/>
</dbReference>
<dbReference type="InterPro" id="IPR003231">
    <property type="entry name" value="ACP"/>
</dbReference>
<dbReference type="InterPro" id="IPR036736">
    <property type="entry name" value="ACP-like_sf"/>
</dbReference>
<dbReference type="InterPro" id="IPR009081">
    <property type="entry name" value="PP-bd_ACP"/>
</dbReference>
<dbReference type="InterPro" id="IPR006162">
    <property type="entry name" value="Ppantetheine_attach_site"/>
</dbReference>
<dbReference type="NCBIfam" id="TIGR00517">
    <property type="entry name" value="acyl_carrier"/>
    <property type="match status" value="1"/>
</dbReference>
<dbReference type="NCBIfam" id="NF002148">
    <property type="entry name" value="PRK00982.1-2"/>
    <property type="match status" value="1"/>
</dbReference>
<dbReference type="NCBIfam" id="NF002149">
    <property type="entry name" value="PRK00982.1-3"/>
    <property type="match status" value="1"/>
</dbReference>
<dbReference type="NCBIfam" id="NF002150">
    <property type="entry name" value="PRK00982.1-4"/>
    <property type="match status" value="1"/>
</dbReference>
<dbReference type="NCBIfam" id="NF002151">
    <property type="entry name" value="PRK00982.1-5"/>
    <property type="match status" value="1"/>
</dbReference>
<dbReference type="PANTHER" id="PTHR20863">
    <property type="entry name" value="ACYL CARRIER PROTEIN"/>
    <property type="match status" value="1"/>
</dbReference>
<dbReference type="PANTHER" id="PTHR20863:SF76">
    <property type="entry name" value="CARRIER DOMAIN-CONTAINING PROTEIN"/>
    <property type="match status" value="1"/>
</dbReference>
<dbReference type="Pfam" id="PF00550">
    <property type="entry name" value="PP-binding"/>
    <property type="match status" value="1"/>
</dbReference>
<dbReference type="SUPFAM" id="SSF47336">
    <property type="entry name" value="ACP-like"/>
    <property type="match status" value="1"/>
</dbReference>
<dbReference type="PROSITE" id="PS50075">
    <property type="entry name" value="CARRIER"/>
    <property type="match status" value="1"/>
</dbReference>
<dbReference type="PROSITE" id="PS00012">
    <property type="entry name" value="PHOSPHOPANTETHEINE"/>
    <property type="match status" value="1"/>
</dbReference>
<feature type="chain" id="PRO_1000066554" description="Acyl carrier protein">
    <location>
        <begin position="1"/>
        <end position="77"/>
    </location>
</feature>
<feature type="domain" description="Carrier" evidence="2">
    <location>
        <begin position="2"/>
        <end position="77"/>
    </location>
</feature>
<feature type="modified residue" description="O-(pantetheine 4'-phosphoryl)serine" evidence="2">
    <location>
        <position position="37"/>
    </location>
</feature>
<name>ACP_BACVZ</name>
<protein>
    <recommendedName>
        <fullName evidence="1">Acyl carrier protein</fullName>
        <shortName evidence="1">ACP</shortName>
    </recommendedName>
</protein>
<gene>
    <name evidence="1" type="primary">acpP</name>
    <name type="ordered locus">RBAM_015750</name>
</gene>